<sequence>MTSELDIFVGNTTLIDEDVYRLWLDGYSVTDAVALRVRSGILEQTGATAAVLQSDTMDHYRTFHMLERLLHAPPKLLHQLIFQIPPSRQALLIERYYAFDEAFVREVLGKKLSKGTKKDLDDISTKTGITLKSCRRQFDNFKRVFKVVEEMRGSLVDNIQQHFLLSDRLARDYAAIVFFANNRFETGKKKLQYLSFGDFAFCAELMIQNWTLGAVGEAPTDPDSQMDDMDMDLDKEFLQDLKELKVLVADKDLLDLHKSLVCTALRGKLGVFSEMEANFKNLSRGLVNVAAKLTHNKDVRDLFVDLVEKFVEPCRSDHWPLSDVRFFLNQYSASVHSLDGFRHQALWDRYMGTLRGCLLRLYHD</sequence>
<accession>O43427</accession>
<accession>A8K0J7</accession>
<accession>Q27Q85</accession>
<accession>Q6IBQ3</accession>
<accession>Q9HD65</accession>
<protein>
    <recommendedName>
        <fullName>Acidic fibroblast growth factor intracellular-binding protein</fullName>
        <shortName>aFGF intracellular-binding protein</shortName>
    </recommendedName>
    <alternativeName>
        <fullName>FGF-1 intracellular-binding protein</fullName>
    </alternativeName>
</protein>
<proteinExistence type="evidence at protein level"/>
<comment type="function">
    <text evidence="1 4">May be involved in mitogenic function of FGF1. May mediate with IER2 FGF-signaling in the establishment of laterality in the embryo (By similarity).</text>
</comment>
<comment type="subunit">
    <text>Binds to internalized FGF1; this interaction is increased in the presence of CSNKB, suggesting a possible cooperative interaction between CSNKB and FIBP in binding to FGF1.</text>
</comment>
<comment type="subcellular location">
    <subcellularLocation>
        <location>Nucleus</location>
    </subcellularLocation>
    <subcellularLocation>
        <location>Endomembrane system</location>
        <topology>Peripheral membrane protein</topology>
    </subcellularLocation>
    <text>Also associated with cytoplasmic membranes, particularly of mitochondria.</text>
</comment>
<comment type="alternative products">
    <event type="alternative splicing"/>
    <isoform>
        <id>O43427-1</id>
        <name>Long</name>
        <sequence type="displayed"/>
    </isoform>
    <isoform>
        <id>O43427-2</id>
        <name>Short</name>
        <sequence type="described" ref="VSP_004250"/>
    </isoform>
</comment>
<comment type="tissue specificity">
    <text>Highly expressed in heart, skeletal muscle and pancreas. Expressed at lower levels in brain. Also found in placenta, liver and kidney.</text>
</comment>
<comment type="disease" evidence="2 3">
    <disease id="DI-04839">
        <name>Thauvin-Robinet-Faivre syndrome</name>
        <acronym>TROFAS</acronym>
        <description>A rare autosomal recessive syndrome characterized by generalized overgrowth, developmental delay, learning disabilities, and variable congenital abnormalities including congenital heart defects, renal dysplasia, and skeletal defects.</description>
        <dbReference type="MIM" id="617107"/>
    </disease>
    <text>The disease is caused by variants affecting the gene represented in this entry.</text>
</comment>
<reference key="1">
    <citation type="journal article" date="1998" name="Biochem. J.">
        <title>Cloning of an intracellular protein that binds selectively to mitogenic acidic fibroblast growth factor.</title>
        <authorList>
            <person name="Kolpakova E."/>
            <person name="Wiedlocha A."/>
            <person name="Stenmark H."/>
            <person name="Klingenberg O."/>
            <person name="Falnes P.O."/>
            <person name="Olsnes S."/>
        </authorList>
    </citation>
    <scope>NUCLEOTIDE SEQUENCE [MRNA] (ISOFORM SHORT)</scope>
    <scope>FUNCTION</scope>
    <source>
        <tissue>Mammary cancer</tissue>
    </source>
</reference>
<reference key="2">
    <citation type="submission" date="1999-07" db="EMBL/GenBank/DDBJ databases">
        <authorList>
            <person name="Imamura T."/>
            <person name="Loupatov A."/>
        </authorList>
    </citation>
    <scope>NUCLEOTIDE SEQUENCE [MRNA] (ISOFORM SHORT)</scope>
    <source>
        <tissue>Heart</tissue>
        <tissue>Mammary cancer</tissue>
        <tissue>Umbilical vein endothelial cell</tissue>
    </source>
</reference>
<reference key="3">
    <citation type="journal article" date="2000" name="Biochem. J.">
        <title>Organization, chromosomal localization and promoter analysis of the gene encoding human acidic fibroblast growth factor intracellular binding protein.</title>
        <authorList>
            <person name="Kolpakova E."/>
            <person name="Frengen E."/>
            <person name="Stokke T."/>
            <person name="Olsnes S."/>
        </authorList>
    </citation>
    <scope>NUCLEOTIDE SEQUENCE [GENOMIC DNA / MRNA] (ISOFORM LONG)</scope>
</reference>
<reference key="4">
    <citation type="submission" date="2004-06" db="EMBL/GenBank/DDBJ databases">
        <title>Cloning of human full open reading frames in Gateway(TM) system entry vector (pDONR201).</title>
        <authorList>
            <person name="Ebert L."/>
            <person name="Schick M."/>
            <person name="Neubert P."/>
            <person name="Schatten R."/>
            <person name="Henze S."/>
            <person name="Korn B."/>
        </authorList>
    </citation>
    <scope>NUCLEOTIDE SEQUENCE [LARGE SCALE MRNA] (ISOFORM SHORT)</scope>
</reference>
<reference key="5">
    <citation type="journal article" date="2004" name="Nat. Genet.">
        <title>Complete sequencing and characterization of 21,243 full-length human cDNAs.</title>
        <authorList>
            <person name="Ota T."/>
            <person name="Suzuki Y."/>
            <person name="Nishikawa T."/>
            <person name="Otsuki T."/>
            <person name="Sugiyama T."/>
            <person name="Irie R."/>
            <person name="Wakamatsu A."/>
            <person name="Hayashi K."/>
            <person name="Sato H."/>
            <person name="Nagai K."/>
            <person name="Kimura K."/>
            <person name="Makita H."/>
            <person name="Sekine M."/>
            <person name="Obayashi M."/>
            <person name="Nishi T."/>
            <person name="Shibahara T."/>
            <person name="Tanaka T."/>
            <person name="Ishii S."/>
            <person name="Yamamoto J."/>
            <person name="Saito K."/>
            <person name="Kawai Y."/>
            <person name="Isono Y."/>
            <person name="Nakamura Y."/>
            <person name="Nagahari K."/>
            <person name="Murakami K."/>
            <person name="Yasuda T."/>
            <person name="Iwayanagi T."/>
            <person name="Wagatsuma M."/>
            <person name="Shiratori A."/>
            <person name="Sudo H."/>
            <person name="Hosoiri T."/>
            <person name="Kaku Y."/>
            <person name="Kodaira H."/>
            <person name="Kondo H."/>
            <person name="Sugawara M."/>
            <person name="Takahashi M."/>
            <person name="Kanda K."/>
            <person name="Yokoi T."/>
            <person name="Furuya T."/>
            <person name="Kikkawa E."/>
            <person name="Omura Y."/>
            <person name="Abe K."/>
            <person name="Kamihara K."/>
            <person name="Katsuta N."/>
            <person name="Sato K."/>
            <person name="Tanikawa M."/>
            <person name="Yamazaki M."/>
            <person name="Ninomiya K."/>
            <person name="Ishibashi T."/>
            <person name="Yamashita H."/>
            <person name="Murakawa K."/>
            <person name="Fujimori K."/>
            <person name="Tanai H."/>
            <person name="Kimata M."/>
            <person name="Watanabe M."/>
            <person name="Hiraoka S."/>
            <person name="Chiba Y."/>
            <person name="Ishida S."/>
            <person name="Ono Y."/>
            <person name="Takiguchi S."/>
            <person name="Watanabe S."/>
            <person name="Yosida M."/>
            <person name="Hotuta T."/>
            <person name="Kusano J."/>
            <person name="Kanehori K."/>
            <person name="Takahashi-Fujii A."/>
            <person name="Hara H."/>
            <person name="Tanase T.-O."/>
            <person name="Nomura Y."/>
            <person name="Togiya S."/>
            <person name="Komai F."/>
            <person name="Hara R."/>
            <person name="Takeuchi K."/>
            <person name="Arita M."/>
            <person name="Imose N."/>
            <person name="Musashino K."/>
            <person name="Yuuki H."/>
            <person name="Oshima A."/>
            <person name="Sasaki N."/>
            <person name="Aotsuka S."/>
            <person name="Yoshikawa Y."/>
            <person name="Matsunawa H."/>
            <person name="Ichihara T."/>
            <person name="Shiohata N."/>
            <person name="Sano S."/>
            <person name="Moriya S."/>
            <person name="Momiyama H."/>
            <person name="Satoh N."/>
            <person name="Takami S."/>
            <person name="Terashima Y."/>
            <person name="Suzuki O."/>
            <person name="Nakagawa S."/>
            <person name="Senoh A."/>
            <person name="Mizoguchi H."/>
            <person name="Goto Y."/>
            <person name="Shimizu F."/>
            <person name="Wakebe H."/>
            <person name="Hishigaki H."/>
            <person name="Watanabe T."/>
            <person name="Sugiyama A."/>
            <person name="Takemoto M."/>
            <person name="Kawakami B."/>
            <person name="Yamazaki M."/>
            <person name="Watanabe K."/>
            <person name="Kumagai A."/>
            <person name="Itakura S."/>
            <person name="Fukuzumi Y."/>
            <person name="Fujimori Y."/>
            <person name="Komiyama M."/>
            <person name="Tashiro H."/>
            <person name="Tanigami A."/>
            <person name="Fujiwara T."/>
            <person name="Ono T."/>
            <person name="Yamada K."/>
            <person name="Fujii Y."/>
            <person name="Ozaki K."/>
            <person name="Hirao M."/>
            <person name="Ohmori Y."/>
            <person name="Kawabata A."/>
            <person name="Hikiji T."/>
            <person name="Kobatake N."/>
            <person name="Inagaki H."/>
            <person name="Ikema Y."/>
            <person name="Okamoto S."/>
            <person name="Okitani R."/>
            <person name="Kawakami T."/>
            <person name="Noguchi S."/>
            <person name="Itoh T."/>
            <person name="Shigeta K."/>
            <person name="Senba T."/>
            <person name="Matsumura K."/>
            <person name="Nakajima Y."/>
            <person name="Mizuno T."/>
            <person name="Morinaga M."/>
            <person name="Sasaki M."/>
            <person name="Togashi T."/>
            <person name="Oyama M."/>
            <person name="Hata H."/>
            <person name="Watanabe M."/>
            <person name="Komatsu T."/>
            <person name="Mizushima-Sugano J."/>
            <person name="Satoh T."/>
            <person name="Shirai Y."/>
            <person name="Takahashi Y."/>
            <person name="Nakagawa K."/>
            <person name="Okumura K."/>
            <person name="Nagase T."/>
            <person name="Nomura N."/>
            <person name="Kikuchi H."/>
            <person name="Masuho Y."/>
            <person name="Yamashita R."/>
            <person name="Nakai K."/>
            <person name="Yada T."/>
            <person name="Nakamura Y."/>
            <person name="Ohara O."/>
            <person name="Isogai T."/>
            <person name="Sugano S."/>
        </authorList>
    </citation>
    <scope>NUCLEOTIDE SEQUENCE [LARGE SCALE MRNA] (ISOFORM SHORT)</scope>
    <source>
        <tissue>Cerebellum</tissue>
    </source>
</reference>
<reference key="6">
    <citation type="submission" date="2006-02" db="EMBL/GenBank/DDBJ databases">
        <authorList>
            <consortium name="NIEHS SNPs program"/>
        </authorList>
    </citation>
    <scope>NUCLEOTIDE SEQUENCE [GENOMIC DNA]</scope>
    <scope>VARIANTS VAL-351 AND ARG-359</scope>
</reference>
<reference key="7">
    <citation type="submission" date="2005-07" db="EMBL/GenBank/DDBJ databases">
        <authorList>
            <person name="Mural R.J."/>
            <person name="Istrail S."/>
            <person name="Sutton G.G."/>
            <person name="Florea L."/>
            <person name="Halpern A.L."/>
            <person name="Mobarry C.M."/>
            <person name="Lippert R."/>
            <person name="Walenz B."/>
            <person name="Shatkay H."/>
            <person name="Dew I."/>
            <person name="Miller J.R."/>
            <person name="Flanigan M.J."/>
            <person name="Edwards N.J."/>
            <person name="Bolanos R."/>
            <person name="Fasulo D."/>
            <person name="Halldorsson B.V."/>
            <person name="Hannenhalli S."/>
            <person name="Turner R."/>
            <person name="Yooseph S."/>
            <person name="Lu F."/>
            <person name="Nusskern D.R."/>
            <person name="Shue B.C."/>
            <person name="Zheng X.H."/>
            <person name="Zhong F."/>
            <person name="Delcher A.L."/>
            <person name="Huson D.H."/>
            <person name="Kravitz S.A."/>
            <person name="Mouchard L."/>
            <person name="Reinert K."/>
            <person name="Remington K.A."/>
            <person name="Clark A.G."/>
            <person name="Waterman M.S."/>
            <person name="Eichler E.E."/>
            <person name="Adams M.D."/>
            <person name="Hunkapiller M.W."/>
            <person name="Myers E.W."/>
            <person name="Venter J.C."/>
        </authorList>
    </citation>
    <scope>NUCLEOTIDE SEQUENCE [LARGE SCALE GENOMIC DNA]</scope>
</reference>
<reference key="8">
    <citation type="journal article" date="2004" name="Genome Res.">
        <title>The status, quality, and expansion of the NIH full-length cDNA project: the Mammalian Gene Collection (MGC).</title>
        <authorList>
            <consortium name="The MGC Project Team"/>
        </authorList>
    </citation>
    <scope>NUCLEOTIDE SEQUENCE [LARGE SCALE MRNA] (ISOFORM SHORT)</scope>
    <source>
        <tissue>Brain</tissue>
        <tissue>Placenta</tissue>
    </source>
</reference>
<reference key="9">
    <citation type="journal article" date="2002" name="J. Biol. Chem.">
        <title>Identification of ribosome-binding protein p34 as an intracellular protein that binds acidic fibroblast growth factor.</title>
        <authorList>
            <person name="Skjerpen C.S."/>
            <person name="Wesche J."/>
            <person name="Olsnes S."/>
        </authorList>
    </citation>
    <scope>INTERACTION WITH FGF1</scope>
</reference>
<reference key="10">
    <citation type="journal article" date="2009" name="Mol. Cell. Proteomics">
        <title>Large-scale proteomics analysis of the human kinome.</title>
        <authorList>
            <person name="Oppermann F.S."/>
            <person name="Gnad F."/>
            <person name="Olsen J.V."/>
            <person name="Hornberger R."/>
            <person name="Greff Z."/>
            <person name="Keri G."/>
            <person name="Mann M."/>
            <person name="Daub H."/>
        </authorList>
    </citation>
    <scope>ACETYLATION [LARGE SCALE ANALYSIS] AT THR-2</scope>
    <scope>CLEAVAGE OF INITIATOR METHIONINE [LARGE SCALE ANALYSIS]</scope>
    <scope>IDENTIFICATION BY MASS SPECTROMETRY [LARGE SCALE ANALYSIS]</scope>
</reference>
<reference key="11">
    <citation type="journal article" date="2011" name="BMC Syst. Biol.">
        <title>Initial characterization of the human central proteome.</title>
        <authorList>
            <person name="Burkard T.R."/>
            <person name="Planyavsky M."/>
            <person name="Kaupe I."/>
            <person name="Breitwieser F.P."/>
            <person name="Buerckstuemmer T."/>
            <person name="Bennett K.L."/>
            <person name="Superti-Furga G."/>
            <person name="Colinge J."/>
        </authorList>
    </citation>
    <scope>IDENTIFICATION BY MASS SPECTROMETRY [LARGE SCALE ANALYSIS]</scope>
</reference>
<reference key="12">
    <citation type="journal article" date="2016" name="Clin. Genet.">
        <title>Homozygous FIBP nonsense variant responsible of syndromic overgrowth, with overgrowth, macrocephaly, retinal coloboma and learning disabilities.</title>
        <authorList>
            <person name="Thauvin-Robinet C."/>
            <person name="Duplomb-Jego L."/>
            <person name="Limoge F."/>
            <person name="Picot D."/>
            <person name="Masurel A."/>
            <person name="Terriat B."/>
            <person name="Champilou C."/>
            <person name="Minot D."/>
            <person name="St-Onge J."/>
            <person name="Kuentz P."/>
            <person name="Duffourd Y."/>
            <person name="Thevenon J."/>
            <person name="Riviere J.B."/>
            <person name="Faivre L."/>
        </authorList>
    </citation>
    <scope>INVOLVEMENT IN TROFAS</scope>
</reference>
<reference key="13">
    <citation type="journal article" date="2016" name="Am. J. Med. Genet. A">
        <title>A recessive syndrome of intellectual disability, moderate overgrowth, and renal dysplasia predisposing to Wilms tumor is caused by a mutation in FIBP gene.</title>
        <authorList>
            <person name="Akawi N."/>
            <person name="Ben-Salem S."/>
            <person name="Lahti L."/>
            <person name="Partanen J."/>
            <person name="Ali B.R."/>
            <person name="Al-Gazali L."/>
        </authorList>
    </citation>
    <scope>VARIANT TROFAS HIS-59 DELINS LEU-ASN</scope>
    <scope>CHARACTERIZATION OF VARIANT TROFAS HIS-59 DELINS LEU-ASN</scope>
    <scope>INVOLVEMENT IN TROFAS</scope>
</reference>
<gene>
    <name type="primary">FIBP</name>
</gene>
<organism>
    <name type="scientific">Homo sapiens</name>
    <name type="common">Human</name>
    <dbReference type="NCBI Taxonomy" id="9606"/>
    <lineage>
        <taxon>Eukaryota</taxon>
        <taxon>Metazoa</taxon>
        <taxon>Chordata</taxon>
        <taxon>Craniata</taxon>
        <taxon>Vertebrata</taxon>
        <taxon>Euteleostomi</taxon>
        <taxon>Mammalia</taxon>
        <taxon>Eutheria</taxon>
        <taxon>Euarchontoglires</taxon>
        <taxon>Primates</taxon>
        <taxon>Haplorrhini</taxon>
        <taxon>Catarrhini</taxon>
        <taxon>Hominidae</taxon>
        <taxon>Homo</taxon>
    </lineage>
</organism>
<keyword id="KW-0007">Acetylation</keyword>
<keyword id="KW-0025">Alternative splicing</keyword>
<keyword id="KW-0225">Disease variant</keyword>
<keyword id="KW-0472">Membrane</keyword>
<keyword id="KW-0539">Nucleus</keyword>
<keyword id="KW-1267">Proteomics identification</keyword>
<keyword id="KW-1185">Reference proteome</keyword>
<evidence type="ECO:0000250" key="1">
    <source>
        <dbReference type="UniProtKB" id="Q6T938"/>
    </source>
</evidence>
<evidence type="ECO:0000269" key="2">
    <source>
    </source>
</evidence>
<evidence type="ECO:0000269" key="3">
    <source>
    </source>
</evidence>
<evidence type="ECO:0000269" key="4">
    <source>
    </source>
</evidence>
<evidence type="ECO:0000269" key="5">
    <source ref="6"/>
</evidence>
<evidence type="ECO:0000303" key="6">
    <source>
    </source>
</evidence>
<evidence type="ECO:0000303" key="7">
    <source>
    </source>
</evidence>
<evidence type="ECO:0000303" key="8">
    <source>
    </source>
</evidence>
<evidence type="ECO:0000303" key="9">
    <source ref="2"/>
</evidence>
<evidence type="ECO:0000303" key="10">
    <source ref="4"/>
</evidence>
<evidence type="ECO:0007744" key="11">
    <source>
    </source>
</evidence>
<feature type="initiator methionine" description="Removed" evidence="11">
    <location>
        <position position="1"/>
    </location>
</feature>
<feature type="chain" id="PRO_0000087237" description="Acidic fibroblast growth factor intracellular-binding protein">
    <location>
        <begin position="2"/>
        <end position="364"/>
    </location>
</feature>
<feature type="modified residue" description="N-acetylthreonine" evidence="11">
    <location>
        <position position="2"/>
    </location>
</feature>
<feature type="splice variant" id="VSP_004250" description="In isoform Short." evidence="6 7 8 9 10">
    <location>
        <begin position="216"/>
        <end position="222"/>
    </location>
</feature>
<feature type="sequence variant" id="VAR_077160" description="In TROFAS." evidence="3">
    <original>H</original>
    <variation>LN</variation>
    <location>
        <position position="59"/>
    </location>
</feature>
<feature type="sequence variant" id="VAR_050991" description="In dbSNP:rs11559154.">
    <original>R</original>
    <variation>W</variation>
    <location>
        <position position="152"/>
    </location>
</feature>
<feature type="sequence variant" id="VAR_050992" description="In dbSNP:rs2231893." evidence="5">
    <original>M</original>
    <variation>V</variation>
    <location>
        <position position="351"/>
    </location>
</feature>
<feature type="sequence variant" id="VAR_060711" description="In dbSNP:rs36080962." evidence="5">
    <original>L</original>
    <variation>R</variation>
    <location>
        <position position="359"/>
    </location>
</feature>
<dbReference type="EMBL" id="AF010187">
    <property type="protein sequence ID" value="AAC97140.2"/>
    <property type="molecule type" value="mRNA"/>
</dbReference>
<dbReference type="EMBL" id="AF171944">
    <property type="protein sequence ID" value="AAD51694.1"/>
    <property type="molecule type" value="mRNA"/>
</dbReference>
<dbReference type="EMBL" id="AF171945">
    <property type="protein sequence ID" value="AAD51695.1"/>
    <property type="molecule type" value="mRNA"/>
</dbReference>
<dbReference type="EMBL" id="AF171946">
    <property type="protein sequence ID" value="AAD51696.1"/>
    <property type="molecule type" value="mRNA"/>
</dbReference>
<dbReference type="EMBL" id="AF250391">
    <property type="protein sequence ID" value="AAG01396.1"/>
    <property type="molecule type" value="mRNA"/>
</dbReference>
<dbReference type="EMBL" id="AF250392">
    <property type="protein sequence ID" value="AAG01397.1"/>
    <property type="molecule type" value="Genomic_DNA"/>
</dbReference>
<dbReference type="EMBL" id="CR456749">
    <property type="protein sequence ID" value="CAG33030.1"/>
    <property type="molecule type" value="mRNA"/>
</dbReference>
<dbReference type="EMBL" id="AK289562">
    <property type="protein sequence ID" value="BAF82251.1"/>
    <property type="molecule type" value="mRNA"/>
</dbReference>
<dbReference type="EMBL" id="DQ388430">
    <property type="protein sequence ID" value="ABD48957.1"/>
    <property type="molecule type" value="Genomic_DNA"/>
</dbReference>
<dbReference type="EMBL" id="CH471076">
    <property type="protein sequence ID" value="EAW74465.1"/>
    <property type="molecule type" value="Genomic_DNA"/>
</dbReference>
<dbReference type="EMBL" id="CH471076">
    <property type="protein sequence ID" value="EAW74466.1"/>
    <property type="molecule type" value="Genomic_DNA"/>
</dbReference>
<dbReference type="EMBL" id="BC014388">
    <property type="protein sequence ID" value="AAH14388.1"/>
    <property type="molecule type" value="mRNA"/>
</dbReference>
<dbReference type="EMBL" id="BC017448">
    <property type="protein sequence ID" value="AAH17448.1"/>
    <property type="molecule type" value="mRNA"/>
</dbReference>
<dbReference type="CCDS" id="CCDS8118.1">
    <molecule id="O43427-2"/>
</dbReference>
<dbReference type="CCDS" id="CCDS8119.1">
    <molecule id="O43427-1"/>
</dbReference>
<dbReference type="RefSeq" id="NP_004205.2">
    <molecule id="O43427-2"/>
    <property type="nucleotide sequence ID" value="NM_004214.4"/>
</dbReference>
<dbReference type="RefSeq" id="NP_942600.1">
    <molecule id="O43427-1"/>
    <property type="nucleotide sequence ID" value="NM_198897.2"/>
</dbReference>
<dbReference type="BioGRID" id="114603">
    <property type="interactions" value="69"/>
</dbReference>
<dbReference type="FunCoup" id="O43427">
    <property type="interactions" value="3559"/>
</dbReference>
<dbReference type="IntAct" id="O43427">
    <property type="interactions" value="33"/>
</dbReference>
<dbReference type="MINT" id="O43427"/>
<dbReference type="STRING" id="9606.ENSP00000344572"/>
<dbReference type="GlyGen" id="O43427">
    <property type="glycosylation" value="1 site"/>
</dbReference>
<dbReference type="iPTMnet" id="O43427"/>
<dbReference type="PhosphoSitePlus" id="O43427"/>
<dbReference type="BioMuta" id="FIBP"/>
<dbReference type="jPOST" id="O43427"/>
<dbReference type="MassIVE" id="O43427"/>
<dbReference type="PaxDb" id="9606-ENSP00000344572"/>
<dbReference type="PeptideAtlas" id="O43427"/>
<dbReference type="ProteomicsDB" id="48941">
    <molecule id="O43427-1"/>
</dbReference>
<dbReference type="ProteomicsDB" id="48942">
    <molecule id="O43427-2"/>
</dbReference>
<dbReference type="Pumba" id="O43427"/>
<dbReference type="Antibodypedia" id="1859">
    <property type="antibodies" value="188 antibodies from 25 providers"/>
</dbReference>
<dbReference type="DNASU" id="9158"/>
<dbReference type="Ensembl" id="ENST00000338369.6">
    <molecule id="O43427-1"/>
    <property type="protein sequence ID" value="ENSP00000344572.2"/>
    <property type="gene ID" value="ENSG00000172500.13"/>
</dbReference>
<dbReference type="Ensembl" id="ENST00000357519.9">
    <molecule id="O43427-2"/>
    <property type="protein sequence ID" value="ENSP00000350124.5"/>
    <property type="gene ID" value="ENSG00000172500.13"/>
</dbReference>
<dbReference type="GeneID" id="9158"/>
<dbReference type="KEGG" id="hsa:9158"/>
<dbReference type="MANE-Select" id="ENST00000357519.9">
    <molecule id="O43427-2"/>
    <property type="protein sequence ID" value="ENSP00000350124.5"/>
    <property type="RefSeq nucleotide sequence ID" value="NM_004214.5"/>
    <property type="RefSeq protein sequence ID" value="NP_004205.2"/>
</dbReference>
<dbReference type="UCSC" id="uc001ogd.4">
    <molecule id="O43427-1"/>
    <property type="organism name" value="human"/>
</dbReference>
<dbReference type="AGR" id="HGNC:3705"/>
<dbReference type="CTD" id="9158"/>
<dbReference type="DisGeNET" id="9158"/>
<dbReference type="GeneCards" id="FIBP"/>
<dbReference type="HGNC" id="HGNC:3705">
    <property type="gene designation" value="FIBP"/>
</dbReference>
<dbReference type="HPA" id="ENSG00000172500">
    <property type="expression patterns" value="Low tissue specificity"/>
</dbReference>
<dbReference type="MalaCards" id="FIBP"/>
<dbReference type="MIM" id="608296">
    <property type="type" value="gene"/>
</dbReference>
<dbReference type="MIM" id="617107">
    <property type="type" value="phenotype"/>
</dbReference>
<dbReference type="neXtProt" id="NX_O43427"/>
<dbReference type="OpenTargets" id="ENSG00000172500"/>
<dbReference type="Orphanet" id="500095">
    <property type="disease" value="Tall stature-intellectual disability-renal anomalies syndrome"/>
</dbReference>
<dbReference type="PharmGKB" id="PA28145"/>
<dbReference type="VEuPathDB" id="HostDB:ENSG00000172500"/>
<dbReference type="eggNOG" id="ENOG502QPQ2">
    <property type="taxonomic scope" value="Eukaryota"/>
</dbReference>
<dbReference type="GeneTree" id="ENSGT00390000015815"/>
<dbReference type="HOGENOM" id="CLU_039181_0_0_1"/>
<dbReference type="InParanoid" id="O43427"/>
<dbReference type="OMA" id="MTVVTCC"/>
<dbReference type="OrthoDB" id="16955at2759"/>
<dbReference type="PAN-GO" id="O43427">
    <property type="GO annotations" value="2 GO annotations based on evolutionary models"/>
</dbReference>
<dbReference type="PhylomeDB" id="O43427"/>
<dbReference type="TreeFam" id="TF323763"/>
<dbReference type="PathwayCommons" id="O43427"/>
<dbReference type="SignaLink" id="O43427"/>
<dbReference type="BioGRID-ORCS" id="9158">
    <property type="hits" value="40 hits in 1172 CRISPR screens"/>
</dbReference>
<dbReference type="ChiTaRS" id="FIBP">
    <property type="organism name" value="human"/>
</dbReference>
<dbReference type="GeneWiki" id="FIBP"/>
<dbReference type="GenomeRNAi" id="9158"/>
<dbReference type="Pharos" id="O43427">
    <property type="development level" value="Tbio"/>
</dbReference>
<dbReference type="PRO" id="PR:O43427"/>
<dbReference type="Proteomes" id="UP000005640">
    <property type="component" value="Chromosome 11"/>
</dbReference>
<dbReference type="RNAct" id="O43427">
    <property type="molecule type" value="protein"/>
</dbReference>
<dbReference type="Bgee" id="ENSG00000172500">
    <property type="expression patterns" value="Expressed in stromal cell of endometrium and 206 other cell types or tissues"/>
</dbReference>
<dbReference type="ExpressionAtlas" id="O43427">
    <property type="expression patterns" value="baseline and differential"/>
</dbReference>
<dbReference type="GO" id="GO:0012505">
    <property type="term" value="C:endomembrane system"/>
    <property type="evidence" value="ECO:0007669"/>
    <property type="project" value="UniProtKB-SubCell"/>
</dbReference>
<dbReference type="GO" id="GO:0016020">
    <property type="term" value="C:membrane"/>
    <property type="evidence" value="ECO:0000314"/>
    <property type="project" value="MGI"/>
</dbReference>
<dbReference type="GO" id="GO:0005739">
    <property type="term" value="C:mitochondrion"/>
    <property type="evidence" value="ECO:0000304"/>
    <property type="project" value="ProtInc"/>
</dbReference>
<dbReference type="GO" id="GO:0016607">
    <property type="term" value="C:nuclear speck"/>
    <property type="evidence" value="ECO:0000314"/>
    <property type="project" value="HPA"/>
</dbReference>
<dbReference type="GO" id="GO:0005634">
    <property type="term" value="C:nucleus"/>
    <property type="evidence" value="ECO:0000314"/>
    <property type="project" value="MGI"/>
</dbReference>
<dbReference type="GO" id="GO:0017134">
    <property type="term" value="F:fibroblast growth factor binding"/>
    <property type="evidence" value="ECO:0000353"/>
    <property type="project" value="MGI"/>
</dbReference>
<dbReference type="GO" id="GO:0008543">
    <property type="term" value="P:fibroblast growth factor receptor signaling pathway"/>
    <property type="evidence" value="ECO:0000304"/>
    <property type="project" value="ProtInc"/>
</dbReference>
<dbReference type="GO" id="GO:0070527">
    <property type="term" value="P:platelet aggregation"/>
    <property type="evidence" value="ECO:0007001"/>
    <property type="project" value="UniProtKB"/>
</dbReference>
<dbReference type="InterPro" id="IPR008614">
    <property type="entry name" value="FIBP"/>
</dbReference>
<dbReference type="PANTHER" id="PTHR13223">
    <property type="entry name" value="ACIDIC FIBROBLAST GROWTH FACTOR INTRACELLULAR BINDING PROTEIN"/>
    <property type="match status" value="1"/>
</dbReference>
<dbReference type="PANTHER" id="PTHR13223:SF2">
    <property type="entry name" value="ACIDIC FIBROBLAST GROWTH FACTOR INTRACELLULAR-BINDING PROTEIN"/>
    <property type="match status" value="1"/>
</dbReference>
<dbReference type="Pfam" id="PF05427">
    <property type="entry name" value="FIBP"/>
    <property type="match status" value="1"/>
</dbReference>
<name>FIBP_HUMAN</name>